<keyword id="KW-0045">Antibiotic biosynthesis</keyword>
<keyword id="KW-0067">ATP-binding</keyword>
<keyword id="KW-0080">Bacteriocin transport</keyword>
<keyword id="KW-1003">Cell membrane</keyword>
<keyword id="KW-0378">Hydrolase</keyword>
<keyword id="KW-0472">Membrane</keyword>
<keyword id="KW-0547">Nucleotide-binding</keyword>
<keyword id="KW-0645">Protease</keyword>
<keyword id="KW-0653">Protein transport</keyword>
<keyword id="KW-1185">Reference proteome</keyword>
<keyword id="KW-0788">Thiol protease</keyword>
<keyword id="KW-1278">Translocase</keyword>
<keyword id="KW-0812">Transmembrane</keyword>
<keyword id="KW-1133">Transmembrane helix</keyword>
<keyword id="KW-0813">Transport</keyword>
<gene>
    <name type="primary">sunT</name>
    <name type="synonym">yolH</name>
    <name type="ordered locus">BSU21470</name>
</gene>
<comment type="function">
    <text>SunT (TC 3.A.1.112.4) is required for production of the lantibiotic sublancin-168, probably by both processing the signal peptide and exporting the resulting mature lantibiotic.</text>
</comment>
<comment type="subunit">
    <text evidence="1">Homodimer.</text>
</comment>
<comment type="subcellular location">
    <subcellularLocation>
        <location evidence="5">Cell membrane</location>
        <topology evidence="5">Multi-pass membrane protein</topology>
    </subcellularLocation>
</comment>
<comment type="similarity">
    <text evidence="5">Belongs to the ABC transporter superfamily. SunT family.</text>
</comment>
<comment type="sequence caution" evidence="5">
    <conflict type="erroneous initiation">
        <sequence resource="EMBL-CDS" id="AAC63532"/>
    </conflict>
</comment>
<feature type="chain" id="PRO_0000092981" description="SPbeta prophage-derived sublancin-168-processing and transport ATP-binding protein SunT">
    <location>
        <begin position="1"/>
        <end position="705"/>
    </location>
</feature>
<feature type="transmembrane region" description="Helical" evidence="4">
    <location>
        <begin position="167"/>
        <end position="187"/>
    </location>
</feature>
<feature type="transmembrane region" description="Helical" evidence="4">
    <location>
        <begin position="205"/>
        <end position="225"/>
    </location>
</feature>
<feature type="transmembrane region" description="Helical" evidence="4">
    <location>
        <begin position="281"/>
        <end position="301"/>
    </location>
</feature>
<feature type="transmembrane region" description="Helical" evidence="4">
    <location>
        <begin position="306"/>
        <end position="326"/>
    </location>
</feature>
<feature type="transmembrane region" description="Helical" evidence="4">
    <location>
        <begin position="388"/>
        <end position="408"/>
    </location>
</feature>
<feature type="transmembrane region" description="Helical" evidence="4">
    <location>
        <begin position="418"/>
        <end position="438"/>
    </location>
</feature>
<feature type="domain" description="Peptidase C39" evidence="2">
    <location>
        <begin position="12"/>
        <end position="138"/>
    </location>
</feature>
<feature type="domain" description="ABC transmembrane type-1" evidence="4">
    <location>
        <begin position="168"/>
        <end position="450"/>
    </location>
</feature>
<feature type="domain" description="ABC transporter" evidence="2 3">
    <location>
        <begin position="483"/>
        <end position="705"/>
    </location>
</feature>
<feature type="active site" evidence="2">
    <location>
        <position position="18"/>
    </location>
</feature>
<feature type="binding site" evidence="2 3">
    <location>
        <begin position="516"/>
        <end position="523"/>
    </location>
    <ligand>
        <name>ATP</name>
        <dbReference type="ChEBI" id="CHEBI:30616"/>
    </ligand>
</feature>
<protein>
    <recommendedName>
        <fullName>SPbeta prophage-derived sublancin-168-processing and transport ATP-binding protein SunT</fullName>
        <ecNumber>3.4.22.-</ecNumber>
        <ecNumber>7.-.-.-</ecNumber>
    </recommendedName>
</protein>
<evidence type="ECO:0000250" key="1"/>
<evidence type="ECO:0000255" key="2">
    <source>
        <dbReference type="PROSITE-ProRule" id="PRU00362"/>
    </source>
</evidence>
<evidence type="ECO:0000255" key="3">
    <source>
        <dbReference type="PROSITE-ProRule" id="PRU00434"/>
    </source>
</evidence>
<evidence type="ECO:0000255" key="4">
    <source>
        <dbReference type="PROSITE-ProRule" id="PRU00441"/>
    </source>
</evidence>
<evidence type="ECO:0000305" key="5"/>
<organism>
    <name type="scientific">Bacillus subtilis (strain 168)</name>
    <dbReference type="NCBI Taxonomy" id="224308"/>
    <lineage>
        <taxon>Bacteria</taxon>
        <taxon>Bacillati</taxon>
        <taxon>Bacillota</taxon>
        <taxon>Bacilli</taxon>
        <taxon>Bacillales</taxon>
        <taxon>Bacillaceae</taxon>
        <taxon>Bacillus</taxon>
    </lineage>
</organism>
<name>SUNT_BACSU</name>
<sequence length="705" mass="81564">MNKKKKYVHTKQFNSHDCGLACISSILKFHNLNYGIDFLLDLIGDKEGYSLRDLIVIFKKMGIKTRPLELQENKTFEALKQIKLPCIALLEGEEYGHYITIYEIRNNYLLVSDPDKDKITKIKKEDFESKFTNFILEIDKESIPEKEKDQKKHSYFFKDILFRNKLIVFVILLTSLFVVGLAVAGSFYIKFLVDLIIPRSLRESLITITLIFISMVLIRCIFDFVRSYLIIKLSYKVDKEMSNVYFNKVTKLPINFFENREDGEVISRFNDGIYIKDFFSANFVTAIIDIILILGLGVILYRTNNILFLTIILPILLLSCLAILFFDHLKKKNQKLMEDKAKSTSLLINFLKNMTTVYSLNKTSFFLEKFHLTYDKQLNSTFSVAKAVISNEILKGLIQNSFTIIILWVGTRQVLNDSMSLGTLLFINTLAAFLLSSLDRILSMQSDLQQAHVASIRFFDVVNYPVQQDSNENLTELDFIQNIKTVNLNIGADPMRYIVEDINLILDRKDKVLIIGESGTGKSTFAKSLSKLYKVPDKSIYLNGLDINRYDHLSIRKRIVYIDENPFLFKGTIKENLCMGEIFDQNEIENACIMSQCHEFICNLDKQYSYKLSENGSNLSTGQKQRLALARAILHQPQVLILDESLSNIDPDNTKLIYETLHRMDCLIILITHNDPSNFKYNKKLVFRNNRIIESSYSENKEYSI</sequence>
<accession>P68579</accession>
<accession>O30671</accession>
<accession>O31988</accession>
<accession>O64034</accession>
<reference key="1">
    <citation type="journal article" date="1998" name="J. Biol. Chem.">
        <title>Identification and characterization of the structural and transporter genes for, and the chemical and biological properties of, sublancin 168, a novel lantibiotic produced by Bacillus subtilis 168.</title>
        <authorList>
            <person name="Paik S.H."/>
            <person name="Chakicherla A."/>
            <person name="Hansen J.N."/>
        </authorList>
    </citation>
    <scope>NUCLEOTIDE SEQUENCE [GENOMIC DNA]</scope>
    <scope>DISCUSSION OF FUNCTION</scope>
    <source>
        <strain>168 / BR151</strain>
    </source>
</reference>
<reference key="2">
    <citation type="journal article" date="1997" name="Nature">
        <title>The complete genome sequence of the Gram-positive bacterium Bacillus subtilis.</title>
        <authorList>
            <person name="Kunst F."/>
            <person name="Ogasawara N."/>
            <person name="Moszer I."/>
            <person name="Albertini A.M."/>
            <person name="Alloni G."/>
            <person name="Azevedo V."/>
            <person name="Bertero M.G."/>
            <person name="Bessieres P."/>
            <person name="Bolotin A."/>
            <person name="Borchert S."/>
            <person name="Borriss R."/>
            <person name="Boursier L."/>
            <person name="Brans A."/>
            <person name="Braun M."/>
            <person name="Brignell S.C."/>
            <person name="Bron S."/>
            <person name="Brouillet S."/>
            <person name="Bruschi C.V."/>
            <person name="Caldwell B."/>
            <person name="Capuano V."/>
            <person name="Carter N.M."/>
            <person name="Choi S.-K."/>
            <person name="Codani J.-J."/>
            <person name="Connerton I.F."/>
            <person name="Cummings N.J."/>
            <person name="Daniel R.A."/>
            <person name="Denizot F."/>
            <person name="Devine K.M."/>
            <person name="Duesterhoeft A."/>
            <person name="Ehrlich S.D."/>
            <person name="Emmerson P.T."/>
            <person name="Entian K.-D."/>
            <person name="Errington J."/>
            <person name="Fabret C."/>
            <person name="Ferrari E."/>
            <person name="Foulger D."/>
            <person name="Fritz C."/>
            <person name="Fujita M."/>
            <person name="Fujita Y."/>
            <person name="Fuma S."/>
            <person name="Galizzi A."/>
            <person name="Galleron N."/>
            <person name="Ghim S.-Y."/>
            <person name="Glaser P."/>
            <person name="Goffeau A."/>
            <person name="Golightly E.J."/>
            <person name="Grandi G."/>
            <person name="Guiseppi G."/>
            <person name="Guy B.J."/>
            <person name="Haga K."/>
            <person name="Haiech J."/>
            <person name="Harwood C.R."/>
            <person name="Henaut A."/>
            <person name="Hilbert H."/>
            <person name="Holsappel S."/>
            <person name="Hosono S."/>
            <person name="Hullo M.-F."/>
            <person name="Itaya M."/>
            <person name="Jones L.-M."/>
            <person name="Joris B."/>
            <person name="Karamata D."/>
            <person name="Kasahara Y."/>
            <person name="Klaerr-Blanchard M."/>
            <person name="Klein C."/>
            <person name="Kobayashi Y."/>
            <person name="Koetter P."/>
            <person name="Koningstein G."/>
            <person name="Krogh S."/>
            <person name="Kumano M."/>
            <person name="Kurita K."/>
            <person name="Lapidus A."/>
            <person name="Lardinois S."/>
            <person name="Lauber J."/>
            <person name="Lazarevic V."/>
            <person name="Lee S.-M."/>
            <person name="Levine A."/>
            <person name="Liu H."/>
            <person name="Masuda S."/>
            <person name="Mauel C."/>
            <person name="Medigue C."/>
            <person name="Medina N."/>
            <person name="Mellado R.P."/>
            <person name="Mizuno M."/>
            <person name="Moestl D."/>
            <person name="Nakai S."/>
            <person name="Noback M."/>
            <person name="Noone D."/>
            <person name="O'Reilly M."/>
            <person name="Ogawa K."/>
            <person name="Ogiwara A."/>
            <person name="Oudega B."/>
            <person name="Park S.-H."/>
            <person name="Parro V."/>
            <person name="Pohl T.M."/>
            <person name="Portetelle D."/>
            <person name="Porwollik S."/>
            <person name="Prescott A.M."/>
            <person name="Presecan E."/>
            <person name="Pujic P."/>
            <person name="Purnelle B."/>
            <person name="Rapoport G."/>
            <person name="Rey M."/>
            <person name="Reynolds S."/>
            <person name="Rieger M."/>
            <person name="Rivolta C."/>
            <person name="Rocha E."/>
            <person name="Roche B."/>
            <person name="Rose M."/>
            <person name="Sadaie Y."/>
            <person name="Sato T."/>
            <person name="Scanlan E."/>
            <person name="Schleich S."/>
            <person name="Schroeter R."/>
            <person name="Scoffone F."/>
            <person name="Sekiguchi J."/>
            <person name="Sekowska A."/>
            <person name="Seror S.J."/>
            <person name="Serror P."/>
            <person name="Shin B.-S."/>
            <person name="Soldo B."/>
            <person name="Sorokin A."/>
            <person name="Tacconi E."/>
            <person name="Takagi T."/>
            <person name="Takahashi H."/>
            <person name="Takemaru K."/>
            <person name="Takeuchi M."/>
            <person name="Tamakoshi A."/>
            <person name="Tanaka T."/>
            <person name="Terpstra P."/>
            <person name="Tognoni A."/>
            <person name="Tosato V."/>
            <person name="Uchiyama S."/>
            <person name="Vandenbol M."/>
            <person name="Vannier F."/>
            <person name="Vassarotti A."/>
            <person name="Viari A."/>
            <person name="Wambutt R."/>
            <person name="Wedler E."/>
            <person name="Wedler H."/>
            <person name="Weitzenegger T."/>
            <person name="Winters P."/>
            <person name="Wipat A."/>
            <person name="Yamamoto H."/>
            <person name="Yamane K."/>
            <person name="Yasumoto K."/>
            <person name="Yata K."/>
            <person name="Yoshida K."/>
            <person name="Yoshikawa H.-F."/>
            <person name="Zumstein E."/>
            <person name="Yoshikawa H."/>
            <person name="Danchin A."/>
        </authorList>
    </citation>
    <scope>NUCLEOTIDE SEQUENCE [LARGE SCALE GENOMIC DNA]</scope>
    <source>
        <strain>168</strain>
    </source>
</reference>
<reference key="3">
    <citation type="journal article" date="2002" name="J. Biol. Chem.">
        <title>Thiol-disulfide oxidoreductases are essential for the production of the lantibiotic sublancin 168.</title>
        <authorList>
            <person name="Dorenbos R."/>
            <person name="Stein T."/>
            <person name="Kabel J."/>
            <person name="Bruand C."/>
            <person name="Bolhuis A."/>
            <person name="Bron S."/>
            <person name="Quax W.J."/>
            <person name="Van Dijl J.M."/>
        </authorList>
    </citation>
    <scope>REQUIREMENT FOR SUBLANCIN PRODUCTION</scope>
    <source>
        <strain>168</strain>
    </source>
</reference>
<dbReference type="EC" id="3.4.22.-"/>
<dbReference type="EC" id="7.-.-.-"/>
<dbReference type="EMBL" id="AF014938">
    <property type="protein sequence ID" value="AAC63532.1"/>
    <property type="status" value="ALT_INIT"/>
    <property type="molecule type" value="Genomic_DNA"/>
</dbReference>
<dbReference type="EMBL" id="AL009126">
    <property type="protein sequence ID" value="CAB14065.1"/>
    <property type="molecule type" value="Genomic_DNA"/>
</dbReference>
<dbReference type="RefSeq" id="NP_390030.1">
    <property type="nucleotide sequence ID" value="NC_000964.3"/>
</dbReference>
<dbReference type="RefSeq" id="WP_003246186.1">
    <property type="nucleotide sequence ID" value="NZ_OZ025638.1"/>
</dbReference>
<dbReference type="SMR" id="P68579"/>
<dbReference type="FunCoup" id="P68579">
    <property type="interactions" value="200"/>
</dbReference>
<dbReference type="STRING" id="224308.BSU21470"/>
<dbReference type="MEROPS" id="C39.A03"/>
<dbReference type="TCDB" id="3.A.1.112.4">
    <property type="family name" value="the atp-binding cassette (abc) superfamily"/>
</dbReference>
<dbReference type="jPOST" id="P68579"/>
<dbReference type="PaxDb" id="224308-BSU21470"/>
<dbReference type="EnsemblBacteria" id="CAB14065">
    <property type="protein sequence ID" value="CAB14065"/>
    <property type="gene ID" value="BSU_21470"/>
</dbReference>
<dbReference type="GeneID" id="939124"/>
<dbReference type="KEGG" id="bsu:BSU21470"/>
<dbReference type="PATRIC" id="fig|224308.179.peg.2344"/>
<dbReference type="eggNOG" id="COG2274">
    <property type="taxonomic scope" value="Bacteria"/>
</dbReference>
<dbReference type="eggNOG" id="COG3271">
    <property type="taxonomic scope" value="Bacteria"/>
</dbReference>
<dbReference type="InParanoid" id="P68579"/>
<dbReference type="OrthoDB" id="9762778at2"/>
<dbReference type="PhylomeDB" id="P68579"/>
<dbReference type="BioCyc" id="BSUB:BSU21470-MONOMER"/>
<dbReference type="Proteomes" id="UP000001570">
    <property type="component" value="Chromosome"/>
</dbReference>
<dbReference type="GO" id="GO:0005886">
    <property type="term" value="C:plasma membrane"/>
    <property type="evidence" value="ECO:0007669"/>
    <property type="project" value="UniProtKB-SubCell"/>
</dbReference>
<dbReference type="GO" id="GO:0140359">
    <property type="term" value="F:ABC-type transporter activity"/>
    <property type="evidence" value="ECO:0007669"/>
    <property type="project" value="InterPro"/>
</dbReference>
<dbReference type="GO" id="GO:0005524">
    <property type="term" value="F:ATP binding"/>
    <property type="evidence" value="ECO:0007669"/>
    <property type="project" value="UniProtKB-KW"/>
</dbReference>
<dbReference type="GO" id="GO:0016887">
    <property type="term" value="F:ATP hydrolysis activity"/>
    <property type="evidence" value="ECO:0007669"/>
    <property type="project" value="InterPro"/>
</dbReference>
<dbReference type="GO" id="GO:0034040">
    <property type="term" value="F:ATPase-coupled lipid transmembrane transporter activity"/>
    <property type="evidence" value="ECO:0000318"/>
    <property type="project" value="GO_Central"/>
</dbReference>
<dbReference type="GO" id="GO:0008234">
    <property type="term" value="F:cysteine-type peptidase activity"/>
    <property type="evidence" value="ECO:0007669"/>
    <property type="project" value="UniProtKB-KW"/>
</dbReference>
<dbReference type="GO" id="GO:0017000">
    <property type="term" value="P:antibiotic biosynthetic process"/>
    <property type="evidence" value="ECO:0007669"/>
    <property type="project" value="UniProtKB-KW"/>
</dbReference>
<dbReference type="GO" id="GO:0043213">
    <property type="term" value="P:bacteriocin transport"/>
    <property type="evidence" value="ECO:0007669"/>
    <property type="project" value="UniProtKB-KW"/>
</dbReference>
<dbReference type="GO" id="GO:0015031">
    <property type="term" value="P:protein transport"/>
    <property type="evidence" value="ECO:0007669"/>
    <property type="project" value="UniProtKB-KW"/>
</dbReference>
<dbReference type="GO" id="GO:0006508">
    <property type="term" value="P:proteolysis"/>
    <property type="evidence" value="ECO:0007669"/>
    <property type="project" value="UniProtKB-KW"/>
</dbReference>
<dbReference type="GO" id="GO:0055085">
    <property type="term" value="P:transmembrane transport"/>
    <property type="evidence" value="ECO:0000318"/>
    <property type="project" value="GO_Central"/>
</dbReference>
<dbReference type="CDD" id="cd18570">
    <property type="entry name" value="ABC_6TM_PCAT1_LagD_like"/>
    <property type="match status" value="1"/>
</dbReference>
<dbReference type="CDD" id="cd03228">
    <property type="entry name" value="ABCC_MRP_Like"/>
    <property type="match status" value="1"/>
</dbReference>
<dbReference type="CDD" id="cd02418">
    <property type="entry name" value="Peptidase_C39B"/>
    <property type="match status" value="1"/>
</dbReference>
<dbReference type="Gene3D" id="1.20.1560.10">
    <property type="entry name" value="ABC transporter type 1, transmembrane domain"/>
    <property type="match status" value="1"/>
</dbReference>
<dbReference type="Gene3D" id="3.90.70.10">
    <property type="entry name" value="Cysteine proteinases"/>
    <property type="match status" value="1"/>
</dbReference>
<dbReference type="Gene3D" id="3.40.50.300">
    <property type="entry name" value="P-loop containing nucleotide triphosphate hydrolases"/>
    <property type="match status" value="1"/>
</dbReference>
<dbReference type="InterPro" id="IPR003593">
    <property type="entry name" value="AAA+_ATPase"/>
</dbReference>
<dbReference type="InterPro" id="IPR011527">
    <property type="entry name" value="ABC1_TM_dom"/>
</dbReference>
<dbReference type="InterPro" id="IPR036640">
    <property type="entry name" value="ABC1_TM_sf"/>
</dbReference>
<dbReference type="InterPro" id="IPR003439">
    <property type="entry name" value="ABC_transporter-like_ATP-bd"/>
</dbReference>
<dbReference type="InterPro" id="IPR027417">
    <property type="entry name" value="P-loop_NTPase"/>
</dbReference>
<dbReference type="InterPro" id="IPR005074">
    <property type="entry name" value="Peptidase_C39"/>
</dbReference>
<dbReference type="InterPro" id="IPR025662">
    <property type="entry name" value="Sigma_54_int_dom_ATP-bd_1"/>
</dbReference>
<dbReference type="InterPro" id="IPR039421">
    <property type="entry name" value="Type_1_exporter"/>
</dbReference>
<dbReference type="PANTHER" id="PTHR24221">
    <property type="entry name" value="ATP-BINDING CASSETTE SUB-FAMILY B"/>
    <property type="match status" value="1"/>
</dbReference>
<dbReference type="PANTHER" id="PTHR24221:SF654">
    <property type="entry name" value="ATP-BINDING CASSETTE SUB-FAMILY B MEMBER 6"/>
    <property type="match status" value="1"/>
</dbReference>
<dbReference type="Pfam" id="PF00664">
    <property type="entry name" value="ABC_membrane"/>
    <property type="match status" value="1"/>
</dbReference>
<dbReference type="Pfam" id="PF00005">
    <property type="entry name" value="ABC_tran"/>
    <property type="match status" value="1"/>
</dbReference>
<dbReference type="Pfam" id="PF03412">
    <property type="entry name" value="Peptidase_C39"/>
    <property type="match status" value="1"/>
</dbReference>
<dbReference type="SMART" id="SM00382">
    <property type="entry name" value="AAA"/>
    <property type="match status" value="1"/>
</dbReference>
<dbReference type="SUPFAM" id="SSF90123">
    <property type="entry name" value="ABC transporter transmembrane region"/>
    <property type="match status" value="1"/>
</dbReference>
<dbReference type="SUPFAM" id="SSF52540">
    <property type="entry name" value="P-loop containing nucleoside triphosphate hydrolases"/>
    <property type="match status" value="1"/>
</dbReference>
<dbReference type="PROSITE" id="PS50929">
    <property type="entry name" value="ABC_TM1F"/>
    <property type="match status" value="1"/>
</dbReference>
<dbReference type="PROSITE" id="PS50893">
    <property type="entry name" value="ABC_TRANSPORTER_2"/>
    <property type="match status" value="1"/>
</dbReference>
<dbReference type="PROSITE" id="PS50990">
    <property type="entry name" value="PEPTIDASE_C39"/>
    <property type="match status" value="1"/>
</dbReference>
<proteinExistence type="inferred from homology"/>